<proteinExistence type="inferred from homology"/>
<reference key="1">
    <citation type="journal article" date="2015" name="Proc. Natl. Acad. Sci. U.S.A.">
        <title>Trichodesmium genome maintains abundant, widespread noncoding DNA in situ, despite oligotrophic lifestyle.</title>
        <authorList>
            <person name="Walworth N."/>
            <person name="Pfreundt U."/>
            <person name="Nelson W.C."/>
            <person name="Mincer T."/>
            <person name="Heidelberg J.F."/>
            <person name="Fu F."/>
            <person name="Waterbury J.B."/>
            <person name="Glavina del Rio T."/>
            <person name="Goodwin L."/>
            <person name="Kyrpides N.C."/>
            <person name="Land M.L."/>
            <person name="Woyke T."/>
            <person name="Hutchins D.A."/>
            <person name="Hess W.R."/>
            <person name="Webb E.A."/>
        </authorList>
    </citation>
    <scope>NUCLEOTIDE SEQUENCE [LARGE SCALE GENOMIC DNA]</scope>
    <source>
        <strain>IMS101</strain>
    </source>
</reference>
<accession>Q117P0</accession>
<comment type="catalytic activity">
    <reaction evidence="1">
        <text>L-citrulline + L-aspartate + ATP = 2-(N(omega)-L-arginino)succinate + AMP + diphosphate + H(+)</text>
        <dbReference type="Rhea" id="RHEA:10932"/>
        <dbReference type="ChEBI" id="CHEBI:15378"/>
        <dbReference type="ChEBI" id="CHEBI:29991"/>
        <dbReference type="ChEBI" id="CHEBI:30616"/>
        <dbReference type="ChEBI" id="CHEBI:33019"/>
        <dbReference type="ChEBI" id="CHEBI:57472"/>
        <dbReference type="ChEBI" id="CHEBI:57743"/>
        <dbReference type="ChEBI" id="CHEBI:456215"/>
        <dbReference type="EC" id="6.3.4.5"/>
    </reaction>
</comment>
<comment type="pathway">
    <text evidence="1">Amino-acid biosynthesis; L-arginine biosynthesis; L-arginine from L-ornithine and carbamoyl phosphate: step 2/3.</text>
</comment>
<comment type="subunit">
    <text evidence="1">Homotetramer.</text>
</comment>
<comment type="subcellular location">
    <subcellularLocation>
        <location evidence="1">Cytoplasm</location>
    </subcellularLocation>
</comment>
<comment type="similarity">
    <text evidence="1">Belongs to the argininosuccinate synthase family. Type 1 subfamily.</text>
</comment>
<sequence>MSRATKVVLAYSGGVDTSVCIPYLKNEWGVKEVITLAADLGQGDELEGVRKKALDSGAVESLVIDVIEPLIKEYAFPAIQANALYENRYPLATALARPLIAKILVEAAEKYGADAIAHGCTGKGNDQVRFDVAIAALNPQIKILAPAREWGMSREETIAYGEEYGIPAPVKKSSPYSIDKNLLGMAIEAGELEDPWVEPPEEVYGMTKAIADTPNEPEYIEIGFERGIPVSLNGQEMGGIELITKLNQIAGNHGIGRIDMIENRLVGIKSREIYESPAMWVLIQGHRDLESLTLTADVTRYKRGIEETYSQLVYNGLWFSPLKGALDAFIQQTQERVTGVVRVKLFKGNAMVVGRKSDNSLYSFDLATYGAEDEFDHKAAEGFIYVWGLPTRVWSEKLRG</sequence>
<evidence type="ECO:0000255" key="1">
    <source>
        <dbReference type="HAMAP-Rule" id="MF_00005"/>
    </source>
</evidence>
<gene>
    <name evidence="1" type="primary">argG</name>
    <name type="ordered locus">Tery_0882</name>
</gene>
<organism>
    <name type="scientific">Trichodesmium erythraeum (strain IMS101)</name>
    <dbReference type="NCBI Taxonomy" id="203124"/>
    <lineage>
        <taxon>Bacteria</taxon>
        <taxon>Bacillati</taxon>
        <taxon>Cyanobacteriota</taxon>
        <taxon>Cyanophyceae</taxon>
        <taxon>Oscillatoriophycideae</taxon>
        <taxon>Oscillatoriales</taxon>
        <taxon>Microcoleaceae</taxon>
        <taxon>Trichodesmium</taxon>
    </lineage>
</organism>
<keyword id="KW-0028">Amino-acid biosynthesis</keyword>
<keyword id="KW-0055">Arginine biosynthesis</keyword>
<keyword id="KW-0067">ATP-binding</keyword>
<keyword id="KW-0963">Cytoplasm</keyword>
<keyword id="KW-0436">Ligase</keyword>
<keyword id="KW-0547">Nucleotide-binding</keyword>
<name>ASSY_TRIEI</name>
<feature type="chain" id="PRO_0000263992" description="Argininosuccinate synthase">
    <location>
        <begin position="1"/>
        <end position="400"/>
    </location>
</feature>
<feature type="binding site" evidence="1">
    <location>
        <begin position="10"/>
        <end position="18"/>
    </location>
    <ligand>
        <name>ATP</name>
        <dbReference type="ChEBI" id="CHEBI:30616"/>
    </ligand>
</feature>
<feature type="binding site" evidence="1">
    <location>
        <position position="38"/>
    </location>
    <ligand>
        <name>ATP</name>
        <dbReference type="ChEBI" id="CHEBI:30616"/>
    </ligand>
</feature>
<feature type="binding site" evidence="1">
    <location>
        <position position="89"/>
    </location>
    <ligand>
        <name>L-citrulline</name>
        <dbReference type="ChEBI" id="CHEBI:57743"/>
    </ligand>
</feature>
<feature type="binding site" evidence="1">
    <location>
        <position position="119"/>
    </location>
    <ligand>
        <name>ATP</name>
        <dbReference type="ChEBI" id="CHEBI:30616"/>
    </ligand>
</feature>
<feature type="binding site" evidence="1">
    <location>
        <position position="121"/>
    </location>
    <ligand>
        <name>L-aspartate</name>
        <dbReference type="ChEBI" id="CHEBI:29991"/>
    </ligand>
</feature>
<feature type="binding site" evidence="1">
    <location>
        <position position="125"/>
    </location>
    <ligand>
        <name>L-aspartate</name>
        <dbReference type="ChEBI" id="CHEBI:29991"/>
    </ligand>
</feature>
<feature type="binding site" evidence="1">
    <location>
        <position position="125"/>
    </location>
    <ligand>
        <name>L-citrulline</name>
        <dbReference type="ChEBI" id="CHEBI:57743"/>
    </ligand>
</feature>
<feature type="binding site" evidence="1">
    <location>
        <position position="126"/>
    </location>
    <ligand>
        <name>L-aspartate</name>
        <dbReference type="ChEBI" id="CHEBI:29991"/>
    </ligand>
</feature>
<feature type="binding site" evidence="1">
    <location>
        <position position="129"/>
    </location>
    <ligand>
        <name>L-citrulline</name>
        <dbReference type="ChEBI" id="CHEBI:57743"/>
    </ligand>
</feature>
<feature type="binding site" evidence="1">
    <location>
        <position position="177"/>
    </location>
    <ligand>
        <name>L-citrulline</name>
        <dbReference type="ChEBI" id="CHEBI:57743"/>
    </ligand>
</feature>
<feature type="binding site" evidence="1">
    <location>
        <position position="262"/>
    </location>
    <ligand>
        <name>L-citrulline</name>
        <dbReference type="ChEBI" id="CHEBI:57743"/>
    </ligand>
</feature>
<feature type="binding site" evidence="1">
    <location>
        <position position="274"/>
    </location>
    <ligand>
        <name>L-citrulline</name>
        <dbReference type="ChEBI" id="CHEBI:57743"/>
    </ligand>
</feature>
<dbReference type="EC" id="6.3.4.5" evidence="1"/>
<dbReference type="EMBL" id="CP000393">
    <property type="protein sequence ID" value="ABG50284.1"/>
    <property type="molecule type" value="Genomic_DNA"/>
</dbReference>
<dbReference type="RefSeq" id="WP_011610675.1">
    <property type="nucleotide sequence ID" value="NC_008312.1"/>
</dbReference>
<dbReference type="SMR" id="Q117P0"/>
<dbReference type="STRING" id="203124.Tery_0882"/>
<dbReference type="KEGG" id="ter:Tery_0882"/>
<dbReference type="eggNOG" id="COG0137">
    <property type="taxonomic scope" value="Bacteria"/>
</dbReference>
<dbReference type="HOGENOM" id="CLU_032784_4_2_3"/>
<dbReference type="OrthoDB" id="9801641at2"/>
<dbReference type="UniPathway" id="UPA00068">
    <property type="reaction ID" value="UER00113"/>
</dbReference>
<dbReference type="GO" id="GO:0005737">
    <property type="term" value="C:cytoplasm"/>
    <property type="evidence" value="ECO:0007669"/>
    <property type="project" value="UniProtKB-SubCell"/>
</dbReference>
<dbReference type="GO" id="GO:0004055">
    <property type="term" value="F:argininosuccinate synthase activity"/>
    <property type="evidence" value="ECO:0007669"/>
    <property type="project" value="UniProtKB-UniRule"/>
</dbReference>
<dbReference type="GO" id="GO:0005524">
    <property type="term" value="F:ATP binding"/>
    <property type="evidence" value="ECO:0007669"/>
    <property type="project" value="UniProtKB-UniRule"/>
</dbReference>
<dbReference type="GO" id="GO:0000053">
    <property type="term" value="P:argininosuccinate metabolic process"/>
    <property type="evidence" value="ECO:0007669"/>
    <property type="project" value="TreeGrafter"/>
</dbReference>
<dbReference type="GO" id="GO:0006526">
    <property type="term" value="P:L-arginine biosynthetic process"/>
    <property type="evidence" value="ECO:0007669"/>
    <property type="project" value="UniProtKB-UniRule"/>
</dbReference>
<dbReference type="GO" id="GO:0000050">
    <property type="term" value="P:urea cycle"/>
    <property type="evidence" value="ECO:0007669"/>
    <property type="project" value="TreeGrafter"/>
</dbReference>
<dbReference type="CDD" id="cd01999">
    <property type="entry name" value="ASS"/>
    <property type="match status" value="1"/>
</dbReference>
<dbReference type="FunFam" id="1.20.5.470:FF:000002">
    <property type="entry name" value="Argininosuccinate synthase"/>
    <property type="match status" value="1"/>
</dbReference>
<dbReference type="FunFam" id="3.40.50.620:FF:000038">
    <property type="entry name" value="Argininosuccinate synthase"/>
    <property type="match status" value="1"/>
</dbReference>
<dbReference type="FunFam" id="3.90.1260.10:FF:000007">
    <property type="entry name" value="Argininosuccinate synthase"/>
    <property type="match status" value="1"/>
</dbReference>
<dbReference type="Gene3D" id="3.90.1260.10">
    <property type="entry name" value="Argininosuccinate synthetase, chain A, domain 2"/>
    <property type="match status" value="1"/>
</dbReference>
<dbReference type="Gene3D" id="3.40.50.620">
    <property type="entry name" value="HUPs"/>
    <property type="match status" value="1"/>
</dbReference>
<dbReference type="Gene3D" id="1.20.5.470">
    <property type="entry name" value="Single helix bin"/>
    <property type="match status" value="1"/>
</dbReference>
<dbReference type="HAMAP" id="MF_00005">
    <property type="entry name" value="Arg_succ_synth_type1"/>
    <property type="match status" value="1"/>
</dbReference>
<dbReference type="InterPro" id="IPR048268">
    <property type="entry name" value="Arginosuc_syn_C"/>
</dbReference>
<dbReference type="InterPro" id="IPR048267">
    <property type="entry name" value="Arginosuc_syn_N"/>
</dbReference>
<dbReference type="InterPro" id="IPR001518">
    <property type="entry name" value="Arginosuc_synth"/>
</dbReference>
<dbReference type="InterPro" id="IPR018223">
    <property type="entry name" value="Arginosuc_synth_CS"/>
</dbReference>
<dbReference type="InterPro" id="IPR023434">
    <property type="entry name" value="Arginosuc_synth_type_1_subfam"/>
</dbReference>
<dbReference type="InterPro" id="IPR024074">
    <property type="entry name" value="AS_cat/multimer_dom_body"/>
</dbReference>
<dbReference type="InterPro" id="IPR014729">
    <property type="entry name" value="Rossmann-like_a/b/a_fold"/>
</dbReference>
<dbReference type="NCBIfam" id="TIGR00032">
    <property type="entry name" value="argG"/>
    <property type="match status" value="1"/>
</dbReference>
<dbReference type="NCBIfam" id="NF001770">
    <property type="entry name" value="PRK00509.1"/>
    <property type="match status" value="1"/>
</dbReference>
<dbReference type="PANTHER" id="PTHR11587">
    <property type="entry name" value="ARGININOSUCCINATE SYNTHASE"/>
    <property type="match status" value="1"/>
</dbReference>
<dbReference type="PANTHER" id="PTHR11587:SF2">
    <property type="entry name" value="ARGININOSUCCINATE SYNTHASE"/>
    <property type="match status" value="1"/>
</dbReference>
<dbReference type="Pfam" id="PF20979">
    <property type="entry name" value="Arginosuc_syn_C"/>
    <property type="match status" value="1"/>
</dbReference>
<dbReference type="Pfam" id="PF00764">
    <property type="entry name" value="Arginosuc_synth"/>
    <property type="match status" value="1"/>
</dbReference>
<dbReference type="SUPFAM" id="SSF52402">
    <property type="entry name" value="Adenine nucleotide alpha hydrolases-like"/>
    <property type="match status" value="1"/>
</dbReference>
<dbReference type="SUPFAM" id="SSF69864">
    <property type="entry name" value="Argininosuccinate synthetase, C-terminal domain"/>
    <property type="match status" value="1"/>
</dbReference>
<dbReference type="PROSITE" id="PS00564">
    <property type="entry name" value="ARGININOSUCCIN_SYN_1"/>
    <property type="match status" value="1"/>
</dbReference>
<dbReference type="PROSITE" id="PS00565">
    <property type="entry name" value="ARGININOSUCCIN_SYN_2"/>
    <property type="match status" value="1"/>
</dbReference>
<protein>
    <recommendedName>
        <fullName evidence="1">Argininosuccinate synthase</fullName>
        <ecNumber evidence="1">6.3.4.5</ecNumber>
    </recommendedName>
    <alternativeName>
        <fullName evidence="1">Citrulline--aspartate ligase</fullName>
    </alternativeName>
</protein>